<name>QUEA_PROM9</name>
<comment type="function">
    <text evidence="1">Transfers and isomerizes the ribose moiety from AdoMet to the 7-aminomethyl group of 7-deazaguanine (preQ1-tRNA) to give epoxyqueuosine (oQ-tRNA).</text>
</comment>
<comment type="catalytic activity">
    <reaction evidence="1">
        <text>7-aminomethyl-7-carbaguanosine(34) in tRNA + S-adenosyl-L-methionine = epoxyqueuosine(34) in tRNA + adenine + L-methionine + 2 H(+)</text>
        <dbReference type="Rhea" id="RHEA:32155"/>
        <dbReference type="Rhea" id="RHEA-COMP:10342"/>
        <dbReference type="Rhea" id="RHEA-COMP:18582"/>
        <dbReference type="ChEBI" id="CHEBI:15378"/>
        <dbReference type="ChEBI" id="CHEBI:16708"/>
        <dbReference type="ChEBI" id="CHEBI:57844"/>
        <dbReference type="ChEBI" id="CHEBI:59789"/>
        <dbReference type="ChEBI" id="CHEBI:82833"/>
        <dbReference type="ChEBI" id="CHEBI:194443"/>
        <dbReference type="EC" id="2.4.99.17"/>
    </reaction>
</comment>
<comment type="pathway">
    <text evidence="1">tRNA modification; tRNA-queuosine biosynthesis.</text>
</comment>
<comment type="subunit">
    <text evidence="1">Monomer.</text>
</comment>
<comment type="subcellular location">
    <subcellularLocation>
        <location evidence="1">Cytoplasm</location>
    </subcellularLocation>
</comment>
<comment type="similarity">
    <text evidence="1">Belongs to the QueA family.</text>
</comment>
<reference key="1">
    <citation type="journal article" date="2006" name="Science">
        <title>Genomic islands and the ecology and evolution of Prochlorococcus.</title>
        <authorList>
            <person name="Coleman M.L."/>
            <person name="Sullivan M.B."/>
            <person name="Martiny A.C."/>
            <person name="Steglich C."/>
            <person name="Barry K."/>
            <person name="Delong E.F."/>
            <person name="Chisholm S.W."/>
        </authorList>
    </citation>
    <scope>NUCLEOTIDE SEQUENCE [LARGE SCALE GENOMIC DNA]</scope>
    <source>
        <strain>MIT 9312</strain>
    </source>
</reference>
<protein>
    <recommendedName>
        <fullName evidence="1">S-adenosylmethionine:tRNA ribosyltransferase-isomerase</fullName>
        <ecNumber evidence="1">2.4.99.17</ecNumber>
    </recommendedName>
    <alternativeName>
        <fullName evidence="1">Queuosine biosynthesis protein QueA</fullName>
    </alternativeName>
</protein>
<gene>
    <name evidence="1" type="primary">queA</name>
    <name type="ordered locus">PMT9312_0401</name>
</gene>
<feature type="chain" id="PRO_1000094801" description="S-adenosylmethionine:tRNA ribosyltransferase-isomerase">
    <location>
        <begin position="1"/>
        <end position="378"/>
    </location>
</feature>
<dbReference type="EC" id="2.4.99.17" evidence="1"/>
<dbReference type="EMBL" id="CP000111">
    <property type="protein sequence ID" value="ABB49462.1"/>
    <property type="molecule type" value="Genomic_DNA"/>
</dbReference>
<dbReference type="RefSeq" id="WP_011375962.1">
    <property type="nucleotide sequence ID" value="NC_007577.1"/>
</dbReference>
<dbReference type="SMR" id="Q31CD3"/>
<dbReference type="STRING" id="74546.PMT9312_0401"/>
<dbReference type="KEGG" id="pmi:PMT9312_0401"/>
<dbReference type="eggNOG" id="COG0809">
    <property type="taxonomic scope" value="Bacteria"/>
</dbReference>
<dbReference type="HOGENOM" id="CLU_039110_1_0_3"/>
<dbReference type="OrthoDB" id="9805933at2"/>
<dbReference type="UniPathway" id="UPA00392"/>
<dbReference type="Proteomes" id="UP000002715">
    <property type="component" value="Chromosome"/>
</dbReference>
<dbReference type="GO" id="GO:0005737">
    <property type="term" value="C:cytoplasm"/>
    <property type="evidence" value="ECO:0007669"/>
    <property type="project" value="UniProtKB-SubCell"/>
</dbReference>
<dbReference type="GO" id="GO:0051075">
    <property type="term" value="F:S-adenosylmethionine:tRNA ribosyltransferase-isomerase activity"/>
    <property type="evidence" value="ECO:0007669"/>
    <property type="project" value="UniProtKB-EC"/>
</dbReference>
<dbReference type="GO" id="GO:0008616">
    <property type="term" value="P:queuosine biosynthetic process"/>
    <property type="evidence" value="ECO:0007669"/>
    <property type="project" value="UniProtKB-UniRule"/>
</dbReference>
<dbReference type="GO" id="GO:0002099">
    <property type="term" value="P:tRNA wobble guanine modification"/>
    <property type="evidence" value="ECO:0007669"/>
    <property type="project" value="TreeGrafter"/>
</dbReference>
<dbReference type="Gene3D" id="2.40.10.240">
    <property type="entry name" value="QueA-like"/>
    <property type="match status" value="1"/>
</dbReference>
<dbReference type="Gene3D" id="3.40.1780.10">
    <property type="entry name" value="QueA-like"/>
    <property type="match status" value="1"/>
</dbReference>
<dbReference type="HAMAP" id="MF_00113">
    <property type="entry name" value="QueA"/>
    <property type="match status" value="1"/>
</dbReference>
<dbReference type="InterPro" id="IPR003699">
    <property type="entry name" value="QueA"/>
</dbReference>
<dbReference type="InterPro" id="IPR042118">
    <property type="entry name" value="QueA_dom1"/>
</dbReference>
<dbReference type="InterPro" id="IPR042119">
    <property type="entry name" value="QueA_dom2"/>
</dbReference>
<dbReference type="InterPro" id="IPR036100">
    <property type="entry name" value="QueA_sf"/>
</dbReference>
<dbReference type="NCBIfam" id="NF001140">
    <property type="entry name" value="PRK00147.1"/>
    <property type="match status" value="1"/>
</dbReference>
<dbReference type="NCBIfam" id="TIGR00113">
    <property type="entry name" value="queA"/>
    <property type="match status" value="1"/>
</dbReference>
<dbReference type="PANTHER" id="PTHR30307">
    <property type="entry name" value="S-ADENOSYLMETHIONINE:TRNA RIBOSYLTRANSFERASE-ISOMERASE"/>
    <property type="match status" value="1"/>
</dbReference>
<dbReference type="PANTHER" id="PTHR30307:SF0">
    <property type="entry name" value="S-ADENOSYLMETHIONINE:TRNA RIBOSYLTRANSFERASE-ISOMERASE"/>
    <property type="match status" value="1"/>
</dbReference>
<dbReference type="Pfam" id="PF02547">
    <property type="entry name" value="Queuosine_synth"/>
    <property type="match status" value="1"/>
</dbReference>
<dbReference type="SUPFAM" id="SSF111337">
    <property type="entry name" value="QueA-like"/>
    <property type="match status" value="1"/>
</dbReference>
<sequence>MISQINNEERDYKLEAYDYFLDPSLIASKPSAIRHESRLMIVRNSVLEEDCLTNKFTKNLLDEFREGDLVVVNNTKVMKARLKVELENRTLVELLVLERSDECVWLCLAKPAKKLKINRKLKLKSPSEQDINLMVDGVDEETGGRFIKFPENITDLNSMNNLLDKYGEIPLPPYIKNSEEESFHENSYQTEYAINPGAVAAPTAGLHLSKSLISNLKKKGVIILPITLHVGYGTFKPIDQEDLTNLKLHKEWVSVNKEVVEEIKRIKKTDRRIIAIGTTSVRALESCYSHEINDFIPIAKYVDLVIKPGYKFRVVDGLLTNFHLPKSSLLLLVSAMIGRERLLDLYKKAIKEKFRFFSYGDAMYISPDSLLEKNRFKL</sequence>
<organism>
    <name type="scientific">Prochlorococcus marinus (strain MIT 9312)</name>
    <dbReference type="NCBI Taxonomy" id="74546"/>
    <lineage>
        <taxon>Bacteria</taxon>
        <taxon>Bacillati</taxon>
        <taxon>Cyanobacteriota</taxon>
        <taxon>Cyanophyceae</taxon>
        <taxon>Synechococcales</taxon>
        <taxon>Prochlorococcaceae</taxon>
        <taxon>Prochlorococcus</taxon>
    </lineage>
</organism>
<accession>Q31CD3</accession>
<evidence type="ECO:0000255" key="1">
    <source>
        <dbReference type="HAMAP-Rule" id="MF_00113"/>
    </source>
</evidence>
<keyword id="KW-0963">Cytoplasm</keyword>
<keyword id="KW-0671">Queuosine biosynthesis</keyword>
<keyword id="KW-0949">S-adenosyl-L-methionine</keyword>
<keyword id="KW-0808">Transferase</keyword>
<proteinExistence type="inferred from homology"/>